<name>MRAZ_ALCBS</name>
<feature type="chain" id="PRO_1000062840" description="Transcriptional regulator MraZ">
    <location>
        <begin position="1"/>
        <end position="146"/>
    </location>
</feature>
<feature type="domain" description="SpoVT-AbrB 1" evidence="2">
    <location>
        <begin position="5"/>
        <end position="52"/>
    </location>
</feature>
<feature type="domain" description="SpoVT-AbrB 2" evidence="2">
    <location>
        <begin position="81"/>
        <end position="124"/>
    </location>
</feature>
<keyword id="KW-0963">Cytoplasm</keyword>
<keyword id="KW-0238">DNA-binding</keyword>
<keyword id="KW-1185">Reference proteome</keyword>
<keyword id="KW-0677">Repeat</keyword>
<keyword id="KW-0804">Transcription</keyword>
<keyword id="KW-0805">Transcription regulation</keyword>
<dbReference type="EMBL" id="AM286690">
    <property type="protein sequence ID" value="CAL16037.1"/>
    <property type="molecule type" value="Genomic_DNA"/>
</dbReference>
<dbReference type="RefSeq" id="WP_011587875.1">
    <property type="nucleotide sequence ID" value="NC_008260.1"/>
</dbReference>
<dbReference type="SMR" id="Q0VS11"/>
<dbReference type="STRING" id="393595.ABO_0589"/>
<dbReference type="KEGG" id="abo:ABO_0589"/>
<dbReference type="eggNOG" id="COG2001">
    <property type="taxonomic scope" value="Bacteria"/>
</dbReference>
<dbReference type="HOGENOM" id="CLU_107907_2_0_6"/>
<dbReference type="OrthoDB" id="9807753at2"/>
<dbReference type="Proteomes" id="UP000008871">
    <property type="component" value="Chromosome"/>
</dbReference>
<dbReference type="GO" id="GO:0005737">
    <property type="term" value="C:cytoplasm"/>
    <property type="evidence" value="ECO:0007669"/>
    <property type="project" value="UniProtKB-UniRule"/>
</dbReference>
<dbReference type="GO" id="GO:0009295">
    <property type="term" value="C:nucleoid"/>
    <property type="evidence" value="ECO:0007669"/>
    <property type="project" value="UniProtKB-SubCell"/>
</dbReference>
<dbReference type="GO" id="GO:0003700">
    <property type="term" value="F:DNA-binding transcription factor activity"/>
    <property type="evidence" value="ECO:0007669"/>
    <property type="project" value="UniProtKB-UniRule"/>
</dbReference>
<dbReference type="GO" id="GO:0000976">
    <property type="term" value="F:transcription cis-regulatory region binding"/>
    <property type="evidence" value="ECO:0007669"/>
    <property type="project" value="TreeGrafter"/>
</dbReference>
<dbReference type="GO" id="GO:2000143">
    <property type="term" value="P:negative regulation of DNA-templated transcription initiation"/>
    <property type="evidence" value="ECO:0007669"/>
    <property type="project" value="TreeGrafter"/>
</dbReference>
<dbReference type="CDD" id="cd16321">
    <property type="entry name" value="MraZ_C"/>
    <property type="match status" value="1"/>
</dbReference>
<dbReference type="CDD" id="cd16320">
    <property type="entry name" value="MraZ_N"/>
    <property type="match status" value="1"/>
</dbReference>
<dbReference type="Gene3D" id="3.40.1550.20">
    <property type="entry name" value="Transcriptional regulator MraZ domain"/>
    <property type="match status" value="1"/>
</dbReference>
<dbReference type="HAMAP" id="MF_01008">
    <property type="entry name" value="MraZ"/>
    <property type="match status" value="1"/>
</dbReference>
<dbReference type="InterPro" id="IPR003444">
    <property type="entry name" value="MraZ"/>
</dbReference>
<dbReference type="InterPro" id="IPR035644">
    <property type="entry name" value="MraZ_C"/>
</dbReference>
<dbReference type="InterPro" id="IPR020603">
    <property type="entry name" value="MraZ_dom"/>
</dbReference>
<dbReference type="InterPro" id="IPR035642">
    <property type="entry name" value="MraZ_N"/>
</dbReference>
<dbReference type="InterPro" id="IPR038619">
    <property type="entry name" value="MraZ_sf"/>
</dbReference>
<dbReference type="InterPro" id="IPR007159">
    <property type="entry name" value="SpoVT-AbrB_dom"/>
</dbReference>
<dbReference type="InterPro" id="IPR037914">
    <property type="entry name" value="SpoVT-AbrB_sf"/>
</dbReference>
<dbReference type="NCBIfam" id="TIGR00242">
    <property type="entry name" value="division/cell wall cluster transcriptional repressor MraZ"/>
    <property type="match status" value="1"/>
</dbReference>
<dbReference type="PANTHER" id="PTHR34701">
    <property type="entry name" value="TRANSCRIPTIONAL REGULATOR MRAZ"/>
    <property type="match status" value="1"/>
</dbReference>
<dbReference type="PANTHER" id="PTHR34701:SF1">
    <property type="entry name" value="TRANSCRIPTIONAL REGULATOR MRAZ"/>
    <property type="match status" value="1"/>
</dbReference>
<dbReference type="Pfam" id="PF02381">
    <property type="entry name" value="MraZ"/>
    <property type="match status" value="2"/>
</dbReference>
<dbReference type="SUPFAM" id="SSF89447">
    <property type="entry name" value="AbrB/MazE/MraZ-like"/>
    <property type="match status" value="1"/>
</dbReference>
<dbReference type="PROSITE" id="PS51740">
    <property type="entry name" value="SPOVT_ABRB"/>
    <property type="match status" value="2"/>
</dbReference>
<comment type="subunit">
    <text evidence="1">Forms oligomers.</text>
</comment>
<comment type="subcellular location">
    <subcellularLocation>
        <location evidence="1">Cytoplasm</location>
        <location evidence="1">Nucleoid</location>
    </subcellularLocation>
</comment>
<comment type="similarity">
    <text evidence="1">Belongs to the MraZ family.</text>
</comment>
<evidence type="ECO:0000255" key="1">
    <source>
        <dbReference type="HAMAP-Rule" id="MF_01008"/>
    </source>
</evidence>
<evidence type="ECO:0000255" key="2">
    <source>
        <dbReference type="PROSITE-ProRule" id="PRU01076"/>
    </source>
</evidence>
<protein>
    <recommendedName>
        <fullName>Transcriptional regulator MraZ</fullName>
    </recommendedName>
</protein>
<accession>Q0VS11</accession>
<proteinExistence type="inferred from homology"/>
<sequence length="146" mass="16389">MFTGSAALNLDAKGRLTMPTRYRASLIDTCGGQLVLTLHPFDDCLALYPRAEFMDTAKKLSEQRDSNPQVRQLKRRFLGQAAEIEMDGSGRLLVPPELRAAINLEKRAMLIGQLHRFEIWKEESWADVDGTLDPAALPESVQELSF</sequence>
<reference key="1">
    <citation type="journal article" date="2006" name="Nat. Biotechnol.">
        <title>Genome sequence of the ubiquitous hydrocarbon-degrading marine bacterium Alcanivorax borkumensis.</title>
        <authorList>
            <person name="Schneiker S."/>
            <person name="Martins dos Santos V.A.P."/>
            <person name="Bartels D."/>
            <person name="Bekel T."/>
            <person name="Brecht M."/>
            <person name="Buhrmester J."/>
            <person name="Chernikova T.N."/>
            <person name="Denaro R."/>
            <person name="Ferrer M."/>
            <person name="Gertler C."/>
            <person name="Goesmann A."/>
            <person name="Golyshina O.V."/>
            <person name="Kaminski F."/>
            <person name="Khachane A.N."/>
            <person name="Lang S."/>
            <person name="Linke B."/>
            <person name="McHardy A.C."/>
            <person name="Meyer F."/>
            <person name="Nechitaylo T."/>
            <person name="Puehler A."/>
            <person name="Regenhardt D."/>
            <person name="Rupp O."/>
            <person name="Sabirova J.S."/>
            <person name="Selbitschka W."/>
            <person name="Yakimov M.M."/>
            <person name="Timmis K.N."/>
            <person name="Vorhoelter F.-J."/>
            <person name="Weidner S."/>
            <person name="Kaiser O."/>
            <person name="Golyshin P.N."/>
        </authorList>
    </citation>
    <scope>NUCLEOTIDE SEQUENCE [LARGE SCALE GENOMIC DNA]</scope>
    <source>
        <strain>ATCC 700651 / DSM 11573 / NCIMB 13689 / SK2</strain>
    </source>
</reference>
<organism>
    <name type="scientific">Alcanivorax borkumensis (strain ATCC 700651 / DSM 11573 / NCIMB 13689 / SK2)</name>
    <dbReference type="NCBI Taxonomy" id="393595"/>
    <lineage>
        <taxon>Bacteria</taxon>
        <taxon>Pseudomonadati</taxon>
        <taxon>Pseudomonadota</taxon>
        <taxon>Gammaproteobacteria</taxon>
        <taxon>Oceanospirillales</taxon>
        <taxon>Alcanivoracaceae</taxon>
        <taxon>Alcanivorax</taxon>
    </lineage>
</organism>
<gene>
    <name evidence="1" type="primary">mraZ</name>
    <name type="ordered locus">ABO_0589</name>
</gene>